<dbReference type="Proteomes" id="UP000286640">
    <property type="component" value="Unplaced"/>
</dbReference>
<organism>
    <name type="scientific">Vulpes vulpes</name>
    <name type="common">Red fox</name>
    <dbReference type="NCBI Taxonomy" id="9627"/>
    <lineage>
        <taxon>Eukaryota</taxon>
        <taxon>Metazoa</taxon>
        <taxon>Chordata</taxon>
        <taxon>Craniata</taxon>
        <taxon>Vertebrata</taxon>
        <taxon>Euteleostomi</taxon>
        <taxon>Mammalia</taxon>
        <taxon>Eutheria</taxon>
        <taxon>Laurasiatheria</taxon>
        <taxon>Carnivora</taxon>
        <taxon>Caniformia</taxon>
        <taxon>Canidae</taxon>
        <taxon>Vulpes</taxon>
    </lineage>
</organism>
<proteinExistence type="evidence at protein level"/>
<accession>P83201</accession>
<feature type="chain" id="PRO_0000312655" description="Autoantigenic sperm protein 7">
    <location>
        <begin position="1"/>
        <end position="16" status="greater than"/>
    </location>
</feature>
<feature type="non-terminal residue" evidence="3">
    <location>
        <position position="16"/>
    </location>
</feature>
<sequence>XDYENSSLWGELEXEL</sequence>
<evidence type="ECO:0000269" key="1">
    <source>
    </source>
</evidence>
<evidence type="ECO:0000269" key="2">
    <source ref="1"/>
</evidence>
<evidence type="ECO:0000303" key="3">
    <source ref="1"/>
</evidence>
<evidence type="ECO:0000305" key="4"/>
<keyword id="KW-0903">Direct protein sequencing</keyword>
<keyword id="KW-1185">Reference proteome</keyword>
<protein>
    <recommendedName>
        <fullName>Autoantigenic sperm protein 7</fullName>
    </recommendedName>
    <alternativeName>
        <fullName>fSP7</fullName>
    </alternativeName>
</protein>
<reference evidence="4" key="1">
    <citation type="submission" date="2001-12" db="UniProtKB">
        <title>Partial characterisation of antigenic sperm proteins in foxes (Vulpes vulpes).</title>
        <authorList>
            <person name="Verdier Y."/>
            <person name="Rouet N."/>
            <person name="Artois M."/>
            <person name="Boue F."/>
        </authorList>
    </citation>
    <scope>PROTEIN SEQUENCE</scope>
    <source>
        <tissue evidence="2">Sperm</tissue>
    </source>
</reference>
<reference key="2">
    <citation type="journal article" date="2002" name="J. Androl.">
        <title>Partial characterization of antigenic sperm proteins in foxes (Vulpes vulpes).</title>
        <authorList>
            <person name="Verdier Y."/>
            <person name="Rouet N."/>
            <person name="Artois M."/>
            <person name="Boue F."/>
        </authorList>
    </citation>
    <scope>IDENTIFICATION BY 2D-PAGE</scope>
</reference>
<name>FSP7_VULVU</name>
<comment type="miscellaneous">
    <text evidence="1">On the 2D-gel the determined pI of this protein is: 6.2, its MW is: 16.4 kDa.</text>
</comment>